<proteinExistence type="inferred from homology"/>
<reference key="1">
    <citation type="submission" date="1996-10" db="EMBL/GenBank/DDBJ databases">
        <title>Cloning, DNA sequencing, and characterization of the Pseudomonas putida PpS145 recA gene, recA-associated gene and recA region.</title>
        <authorList>
            <person name="Yan M."/>
            <person name="McBeth D.L."/>
        </authorList>
    </citation>
    <scope>NUCLEOTIDE SEQUENCE [GENOMIC DNA]</scope>
    <source>
        <strain>PPS145</strain>
    </source>
</reference>
<protein>
    <recommendedName>
        <fullName>Nicotinamide-nucleotide amidohydrolase PncC</fullName>
        <shortName>NMN amidohydrolase PncC</shortName>
        <ecNumber>3.5.1.42</ecNumber>
    </recommendedName>
    <alternativeName>
        <fullName>NMN deamidase</fullName>
    </alternativeName>
    <alternativeName>
        <fullName>Nicotinamide-nucleotide amidase</fullName>
    </alternativeName>
</protein>
<dbReference type="EC" id="3.5.1.42"/>
<dbReference type="EMBL" id="U70864">
    <property type="protein sequence ID" value="AAB16920.1"/>
    <property type="molecule type" value="Genomic_DNA"/>
</dbReference>
<dbReference type="PIR" id="T10481">
    <property type="entry name" value="T10481"/>
</dbReference>
<dbReference type="SMR" id="P72227"/>
<dbReference type="eggNOG" id="COG1546">
    <property type="taxonomic scope" value="Bacteria"/>
</dbReference>
<dbReference type="GO" id="GO:0019159">
    <property type="term" value="F:nicotinamide-nucleotide amidase activity"/>
    <property type="evidence" value="ECO:0007669"/>
    <property type="project" value="UniProtKB-EC"/>
</dbReference>
<dbReference type="GO" id="GO:0019363">
    <property type="term" value="P:pyridine nucleotide biosynthetic process"/>
    <property type="evidence" value="ECO:0007669"/>
    <property type="project" value="UniProtKB-KW"/>
</dbReference>
<dbReference type="Gene3D" id="3.90.950.20">
    <property type="entry name" value="CinA-like"/>
    <property type="match status" value="1"/>
</dbReference>
<dbReference type="InterPro" id="IPR036653">
    <property type="entry name" value="CinA-like_C"/>
</dbReference>
<dbReference type="InterPro" id="IPR008136">
    <property type="entry name" value="CinA_C"/>
</dbReference>
<dbReference type="NCBIfam" id="TIGR00199">
    <property type="entry name" value="PncC_domain"/>
    <property type="match status" value="1"/>
</dbReference>
<dbReference type="Pfam" id="PF02464">
    <property type="entry name" value="CinA"/>
    <property type="match status" value="1"/>
</dbReference>
<dbReference type="SUPFAM" id="SSF142433">
    <property type="entry name" value="CinA-like"/>
    <property type="match status" value="1"/>
</dbReference>
<feature type="chain" id="PRO_0000156794" description="Nicotinamide-nucleotide amidohydrolase PncC">
    <location>
        <begin position="1"/>
        <end position="160"/>
    </location>
</feature>
<evidence type="ECO:0000250" key="1"/>
<evidence type="ECO:0000305" key="2"/>
<gene>
    <name type="primary">pncC</name>
</gene>
<accession>P72227</accession>
<organism>
    <name type="scientific">Pseudomonas putida</name>
    <name type="common">Arthrobacter siderocapsulatus</name>
    <dbReference type="NCBI Taxonomy" id="303"/>
    <lineage>
        <taxon>Bacteria</taxon>
        <taxon>Pseudomonadati</taxon>
        <taxon>Pseudomonadota</taxon>
        <taxon>Gammaproteobacteria</taxon>
        <taxon>Pseudomonadales</taxon>
        <taxon>Pseudomonadaceae</taxon>
        <taxon>Pseudomonas</taxon>
    </lineage>
</organism>
<name>PNCC_PSEPU</name>
<comment type="function">
    <text evidence="1">Has NMN aminohydrolase activity, not active on other substrates.</text>
</comment>
<comment type="catalytic activity">
    <reaction>
        <text>beta-nicotinamide D-ribonucleotide + H2O = nicotinate beta-D-ribonucleotide + NH4(+)</text>
        <dbReference type="Rhea" id="RHEA:12400"/>
        <dbReference type="ChEBI" id="CHEBI:14649"/>
        <dbReference type="ChEBI" id="CHEBI:15377"/>
        <dbReference type="ChEBI" id="CHEBI:28938"/>
        <dbReference type="ChEBI" id="CHEBI:57502"/>
        <dbReference type="EC" id="3.5.1.42"/>
    </reaction>
</comment>
<comment type="subunit">
    <text evidence="1">Homodimer.</text>
</comment>
<comment type="similarity">
    <text evidence="2">Belongs to the CinA family. PncC subfamily.</text>
</comment>
<sequence>MDPITTLATRLGEHLRRFNAQVTTAESCTGGGIAEAITRVPGSSAWFEAGYVTYSNAQKTRQLGVPEVLFGQVGAVSQEVVEAMVRGAQAASGARFAVAVSGVAGPDGGSPAKPVGTVWLAWGDGSRVFSERRQFDGDREAVRRQTVIAALDGLLQLGTE</sequence>
<keyword id="KW-0378">Hydrolase</keyword>
<keyword id="KW-0662">Pyridine nucleotide biosynthesis</keyword>